<reference key="1">
    <citation type="submission" date="2005-07" db="EMBL/GenBank/DDBJ databases">
        <title>Complete sequence of Synechococcus sp. CC9605.</title>
        <authorList>
            <consortium name="US DOE Joint Genome Institute"/>
            <person name="Copeland A."/>
            <person name="Lucas S."/>
            <person name="Lapidus A."/>
            <person name="Barry K."/>
            <person name="Detter J.C."/>
            <person name="Glavina T."/>
            <person name="Hammon N."/>
            <person name="Israni S."/>
            <person name="Pitluck S."/>
            <person name="Schmutz J."/>
            <person name="Martinez M."/>
            <person name="Larimer F."/>
            <person name="Land M."/>
            <person name="Kyrpides N."/>
            <person name="Ivanova N."/>
            <person name="Richardson P."/>
        </authorList>
    </citation>
    <scope>NUCLEOTIDE SEQUENCE [LARGE SCALE GENOMIC DNA]</scope>
    <source>
        <strain>CC9605</strain>
    </source>
</reference>
<organism>
    <name type="scientific">Synechococcus sp. (strain CC9605)</name>
    <dbReference type="NCBI Taxonomy" id="110662"/>
    <lineage>
        <taxon>Bacteria</taxon>
        <taxon>Bacillati</taxon>
        <taxon>Cyanobacteriota</taxon>
        <taxon>Cyanophyceae</taxon>
        <taxon>Synechococcales</taxon>
        <taxon>Synechococcaceae</taxon>
        <taxon>Synechococcus</taxon>
    </lineage>
</organism>
<name>HSLO_SYNSC</name>
<dbReference type="EMBL" id="CP000110">
    <property type="protein sequence ID" value="ABB35036.1"/>
    <property type="molecule type" value="Genomic_DNA"/>
</dbReference>
<dbReference type="RefSeq" id="WP_011364255.1">
    <property type="nucleotide sequence ID" value="NC_007516.1"/>
</dbReference>
<dbReference type="SMR" id="Q3AK46"/>
<dbReference type="STRING" id="110662.Syncc9605_1282"/>
<dbReference type="KEGG" id="syd:Syncc9605_1282"/>
<dbReference type="eggNOG" id="COG1281">
    <property type="taxonomic scope" value="Bacteria"/>
</dbReference>
<dbReference type="HOGENOM" id="CLU_054493_1_0_3"/>
<dbReference type="OrthoDB" id="9776534at2"/>
<dbReference type="GO" id="GO:0005737">
    <property type="term" value="C:cytoplasm"/>
    <property type="evidence" value="ECO:0007669"/>
    <property type="project" value="UniProtKB-SubCell"/>
</dbReference>
<dbReference type="GO" id="GO:0044183">
    <property type="term" value="F:protein folding chaperone"/>
    <property type="evidence" value="ECO:0007669"/>
    <property type="project" value="TreeGrafter"/>
</dbReference>
<dbReference type="GO" id="GO:0051082">
    <property type="term" value="F:unfolded protein binding"/>
    <property type="evidence" value="ECO:0007669"/>
    <property type="project" value="UniProtKB-UniRule"/>
</dbReference>
<dbReference type="GO" id="GO:0042026">
    <property type="term" value="P:protein refolding"/>
    <property type="evidence" value="ECO:0007669"/>
    <property type="project" value="TreeGrafter"/>
</dbReference>
<dbReference type="CDD" id="cd00498">
    <property type="entry name" value="Hsp33"/>
    <property type="match status" value="1"/>
</dbReference>
<dbReference type="Gene3D" id="3.55.30.10">
    <property type="entry name" value="Hsp33 domain"/>
    <property type="match status" value="1"/>
</dbReference>
<dbReference type="Gene3D" id="3.90.1280.10">
    <property type="entry name" value="HSP33 redox switch-like"/>
    <property type="match status" value="1"/>
</dbReference>
<dbReference type="HAMAP" id="MF_00117">
    <property type="entry name" value="HslO"/>
    <property type="match status" value="1"/>
</dbReference>
<dbReference type="InterPro" id="IPR000397">
    <property type="entry name" value="Heat_shock_Hsp33"/>
</dbReference>
<dbReference type="InterPro" id="IPR016154">
    <property type="entry name" value="Heat_shock_Hsp33_C"/>
</dbReference>
<dbReference type="InterPro" id="IPR016153">
    <property type="entry name" value="Heat_shock_Hsp33_N"/>
</dbReference>
<dbReference type="NCBIfam" id="NF001033">
    <property type="entry name" value="PRK00114.1"/>
    <property type="match status" value="1"/>
</dbReference>
<dbReference type="PANTHER" id="PTHR30111">
    <property type="entry name" value="33 KDA CHAPERONIN"/>
    <property type="match status" value="1"/>
</dbReference>
<dbReference type="PANTHER" id="PTHR30111:SF1">
    <property type="entry name" value="33 KDA CHAPERONIN"/>
    <property type="match status" value="1"/>
</dbReference>
<dbReference type="Pfam" id="PF01430">
    <property type="entry name" value="HSP33"/>
    <property type="match status" value="1"/>
</dbReference>
<dbReference type="PIRSF" id="PIRSF005261">
    <property type="entry name" value="Heat_shock_Hsp33"/>
    <property type="match status" value="1"/>
</dbReference>
<dbReference type="SUPFAM" id="SSF64397">
    <property type="entry name" value="Hsp33 domain"/>
    <property type="match status" value="1"/>
</dbReference>
<dbReference type="SUPFAM" id="SSF118352">
    <property type="entry name" value="HSP33 redox switch-like"/>
    <property type="match status" value="1"/>
</dbReference>
<accession>Q3AK46</accession>
<evidence type="ECO:0000255" key="1">
    <source>
        <dbReference type="HAMAP-Rule" id="MF_00117"/>
    </source>
</evidence>
<proteinExistence type="inferred from homology"/>
<sequence>MADRLVRATAAAGGIRLVAVSTTNIVREARERHGLSFLTSVMLGRAMTAGLMLASSMKVRHGRVNLRLGSDGPIKNLMVDAGRNGTVRGYVGEPALELDPIQDEAGHFSFNFKEAAGTGYLHVMRDDGKGEPFNSTVELVSGGIGEDVASYLLHSEQTPSAVFVGEQVNSAGIHASGGLLVQILPKAAEEPALVELIEQRCREITGFSQRLAASGDQLEDLLLDVFPDLDPKPLDDAEASQELRFFCPCSHERSKAALLLLGRDELTDMRDKDGGAELTCHFCNNRYDVSAAELQELIDGLPAAA</sequence>
<feature type="chain" id="PRO_0000238102" description="33 kDa chaperonin">
    <location>
        <begin position="1"/>
        <end position="305"/>
    </location>
</feature>
<feature type="disulfide bond" description="Redox-active" evidence="1">
    <location>
        <begin position="247"/>
        <end position="249"/>
    </location>
</feature>
<feature type="disulfide bond" description="Redox-active" evidence="1">
    <location>
        <begin position="280"/>
        <end position="283"/>
    </location>
</feature>
<protein>
    <recommendedName>
        <fullName evidence="1">33 kDa chaperonin</fullName>
    </recommendedName>
    <alternativeName>
        <fullName evidence="1">Heat shock protein 33 homolog</fullName>
        <shortName evidence="1">HSP33</shortName>
    </alternativeName>
</protein>
<comment type="function">
    <text evidence="1">Redox regulated molecular chaperone. Protects both thermally unfolding and oxidatively damaged proteins from irreversible aggregation. Plays an important role in the bacterial defense system toward oxidative stress.</text>
</comment>
<comment type="subcellular location">
    <subcellularLocation>
        <location evidence="1">Cytoplasm</location>
    </subcellularLocation>
</comment>
<comment type="PTM">
    <text evidence="1">Under oxidizing conditions two disulfide bonds are formed involving the reactive cysteines. Under reducing conditions zinc is bound to the reactive cysteines and the protein is inactive.</text>
</comment>
<comment type="similarity">
    <text evidence="1">Belongs to the HSP33 family.</text>
</comment>
<gene>
    <name evidence="1" type="primary">hslO</name>
    <name type="ordered locus">Syncc9605_1282</name>
</gene>
<keyword id="KW-0143">Chaperone</keyword>
<keyword id="KW-0963">Cytoplasm</keyword>
<keyword id="KW-1015">Disulfide bond</keyword>
<keyword id="KW-0676">Redox-active center</keyword>
<keyword id="KW-0862">Zinc</keyword>